<sequence length="72" mass="7542">MSLSFSLIVFAVGVAVSIGVLTLTTQQSSSYCLILVDGAKAVVEGCHLRQDIPAILSELKPASSPFNPLFCS</sequence>
<feature type="chain" id="PRO_0000401076" description="Movement protein TGBp3">
    <location>
        <begin position="1"/>
        <end position="72"/>
    </location>
</feature>
<feature type="topological domain" description="Lumenal" evidence="2">
    <location>
        <begin position="1"/>
        <end position="2"/>
    </location>
</feature>
<feature type="transmembrane region" description="Helical" evidence="2">
    <location>
        <begin position="3"/>
        <end position="23"/>
    </location>
</feature>
<feature type="topological domain" description="Cytoplasmic" evidence="2">
    <location>
        <begin position="24"/>
        <end position="72"/>
    </location>
</feature>
<protein>
    <recommendedName>
        <fullName>Movement protein TGBp3</fullName>
    </recommendedName>
    <alternativeName>
        <fullName>Triple gene block 3 protein</fullName>
        <shortName>TGBp3</shortName>
    </alternativeName>
</protein>
<reference key="1">
    <citation type="submission" date="2008-03" db="EMBL/GenBank/DDBJ databases">
        <title>Molecular characterization of Lolium latent virus, proposed type member of a new genus in the family Flexiviridae.</title>
        <authorList>
            <person name="Vaira A.M.V."/>
            <person name="Maroon-Lango C.J."/>
            <person name="Hammond J."/>
        </authorList>
    </citation>
    <scope>NUCLEOTIDE SEQUENCE [GENOMIC RNA]</scope>
</reference>
<organism>
    <name type="scientific">Lolium latent virus (isolate Lolium/USA/US1/-)</name>
    <name type="common">LoLV</name>
    <dbReference type="NCBI Taxonomy" id="686945"/>
    <lineage>
        <taxon>Viruses</taxon>
        <taxon>Riboviria</taxon>
        <taxon>Orthornavirae</taxon>
        <taxon>Kitrinoviricota</taxon>
        <taxon>Alsuviricetes</taxon>
        <taxon>Tymovirales</taxon>
        <taxon>Alphaflexiviridae</taxon>
        <taxon>Lolavirus</taxon>
        <taxon>Lolium latent virus</taxon>
    </lineage>
</organism>
<evidence type="ECO:0000250" key="1"/>
<evidence type="ECO:0000255" key="2"/>
<evidence type="ECO:0000305" key="3"/>
<dbReference type="EMBL" id="EU489641">
    <property type="protein sequence ID" value="ACA53377.1"/>
    <property type="molecule type" value="Genomic_RNA"/>
</dbReference>
<dbReference type="RefSeq" id="YP_001718502.1">
    <property type="nucleotide sequence ID" value="NC_010434.1"/>
</dbReference>
<dbReference type="KEGG" id="vg:6000099"/>
<dbReference type="Proteomes" id="UP000008689">
    <property type="component" value="Segment"/>
</dbReference>
<dbReference type="GO" id="GO:0044167">
    <property type="term" value="C:host cell endoplasmic reticulum membrane"/>
    <property type="evidence" value="ECO:0007669"/>
    <property type="project" value="UniProtKB-SubCell"/>
</dbReference>
<dbReference type="GO" id="GO:0016020">
    <property type="term" value="C:membrane"/>
    <property type="evidence" value="ECO:0007669"/>
    <property type="project" value="UniProtKB-KW"/>
</dbReference>
<dbReference type="GO" id="GO:0046740">
    <property type="term" value="P:transport of virus in host, cell to cell"/>
    <property type="evidence" value="ECO:0007669"/>
    <property type="project" value="UniProtKB-KW"/>
</dbReference>
<dbReference type="InterPro" id="IPR003411">
    <property type="entry name" value="TGBp3"/>
</dbReference>
<dbReference type="Pfam" id="PF02495">
    <property type="entry name" value="TGBp3"/>
    <property type="match status" value="1"/>
</dbReference>
<keyword id="KW-1038">Host endoplasmic reticulum</keyword>
<keyword id="KW-1043">Host membrane</keyword>
<keyword id="KW-0472">Membrane</keyword>
<keyword id="KW-1185">Reference proteome</keyword>
<keyword id="KW-0812">Transmembrane</keyword>
<keyword id="KW-1133">Transmembrane helix</keyword>
<keyword id="KW-0813">Transport</keyword>
<keyword id="KW-0916">Viral movement protein</keyword>
<accession>B1PS79</accession>
<comment type="function">
    <text evidence="1">Plays a role in viral cell-to-cell propagation, by facilitating genome transport to neighboring plant cells through plasmosdesmata. May induce the formation of granular vesicles derived from the Endoplasmic reticulum, which align on actin filaments (By similarity).</text>
</comment>
<comment type="subcellular location">
    <subcellularLocation>
        <location evidence="1">Host endoplasmic reticulum membrane</location>
    </subcellularLocation>
</comment>
<comment type="miscellaneous">
    <text>TGBp1, TGBp2 and TGBp3 seem to act together for cell-to-cell propagation. TGBp1 is the main movement protein that physically cross the plasmodesma with the viral genome. TGBp2 and TGBp3 would facilitate TGBp1 function.</text>
</comment>
<comment type="similarity">
    <text evidence="3">Belongs to the Tymovirales TGBp3 protein family.</text>
</comment>
<proteinExistence type="inferred from homology"/>
<organismHost>
    <name type="scientific">Lolium multiflorum x Lolium perenne</name>
    <dbReference type="NCBI Taxonomy" id="480553"/>
</organismHost>
<name>TGB3_LOLV</name>
<gene>
    <name type="primary">ORF4</name>
</gene>